<accession>P9WGV7</accession>
<accession>L0T9Z0</accession>
<accession>P67487</accession>
<accession>P94999</accession>
<comment type="function">
    <text evidence="1">Could be a nuclease involved in processing of the 5'-end of pre-16S rRNA.</text>
</comment>
<comment type="subcellular location">
    <subcellularLocation>
        <location evidence="1">Cytoplasm</location>
    </subcellularLocation>
</comment>
<comment type="miscellaneous">
    <text>Was identified as a high-confidence drug target.</text>
</comment>
<comment type="similarity">
    <text evidence="1">Belongs to the YqgF nuclease family.</text>
</comment>
<reference key="1">
    <citation type="journal article" date="1998" name="Nature">
        <title>Deciphering the biology of Mycobacterium tuberculosis from the complete genome sequence.</title>
        <authorList>
            <person name="Cole S.T."/>
            <person name="Brosch R."/>
            <person name="Parkhill J."/>
            <person name="Garnier T."/>
            <person name="Churcher C.M."/>
            <person name="Harris D.E."/>
            <person name="Gordon S.V."/>
            <person name="Eiglmeier K."/>
            <person name="Gas S."/>
            <person name="Barry C.E. III"/>
            <person name="Tekaia F."/>
            <person name="Badcock K."/>
            <person name="Basham D."/>
            <person name="Brown D."/>
            <person name="Chillingworth T."/>
            <person name="Connor R."/>
            <person name="Davies R.M."/>
            <person name="Devlin K."/>
            <person name="Feltwell T."/>
            <person name="Gentles S."/>
            <person name="Hamlin N."/>
            <person name="Holroyd S."/>
            <person name="Hornsby T."/>
            <person name="Jagels K."/>
            <person name="Krogh A."/>
            <person name="McLean J."/>
            <person name="Moule S."/>
            <person name="Murphy L.D."/>
            <person name="Oliver S."/>
            <person name="Osborne J."/>
            <person name="Quail M.A."/>
            <person name="Rajandream M.A."/>
            <person name="Rogers J."/>
            <person name="Rutter S."/>
            <person name="Seeger K."/>
            <person name="Skelton S."/>
            <person name="Squares S."/>
            <person name="Squares R."/>
            <person name="Sulston J.E."/>
            <person name="Taylor K."/>
            <person name="Whitehead S."/>
            <person name="Barrell B.G."/>
        </authorList>
    </citation>
    <scope>NUCLEOTIDE SEQUENCE [LARGE SCALE GENOMIC DNA]</scope>
    <source>
        <strain>ATCC 25618 / H37Rv</strain>
    </source>
</reference>
<reference key="2">
    <citation type="journal article" date="2008" name="BMC Syst. Biol.">
        <title>targetTB: a target identification pipeline for Mycobacterium tuberculosis through an interactome, reactome and genome-scale structural analysis.</title>
        <authorList>
            <person name="Raman K."/>
            <person name="Yeturu K."/>
            <person name="Chandra N."/>
        </authorList>
    </citation>
    <scope>IDENTIFICATION AS A DRUG TARGET [LARGE SCALE ANALYSIS]</scope>
</reference>
<reference key="3">
    <citation type="journal article" date="2011" name="Mol. Cell. Proteomics">
        <title>Proteogenomic analysis of Mycobacterium tuberculosis by high resolution mass spectrometry.</title>
        <authorList>
            <person name="Kelkar D.S."/>
            <person name="Kumar D."/>
            <person name="Kumar P."/>
            <person name="Balakrishnan L."/>
            <person name="Muthusamy B."/>
            <person name="Yadav A.K."/>
            <person name="Shrivastava P."/>
            <person name="Marimuthu A."/>
            <person name="Anand S."/>
            <person name="Sundaram H."/>
            <person name="Kingsbury R."/>
            <person name="Harsha H.C."/>
            <person name="Nair B."/>
            <person name="Prasad T.S."/>
            <person name="Chauhan D.S."/>
            <person name="Katoch K."/>
            <person name="Katoch V.M."/>
            <person name="Kumar P."/>
            <person name="Chaerkady R."/>
            <person name="Ramachandran S."/>
            <person name="Dash D."/>
            <person name="Pandey A."/>
        </authorList>
    </citation>
    <scope>IDENTIFICATION BY MASS SPECTROMETRY [LARGE SCALE ANALYSIS]</scope>
    <source>
        <strain>ATCC 25618 / H37Rv</strain>
    </source>
</reference>
<gene>
    <name type="ordered locus">Rv2554c</name>
    <name type="ORF">MTCY159.02</name>
</gene>
<name>YQGF_MYCTU</name>
<sequence>MVPAQHRPPDRPGDPAHDPGRGRRLGIDVGAARIGVACSDPDAILATPVETVRRDRSGKHLRRLAALAAELEAVEVIVGLPRTLADRIGRSAQDAIELAEALARRVSPTPVRLADERLTTVSAQRSLRQAGVRASEQRAVIDQAAAVAILQSWLDERLAAMAGTQEGSDA</sequence>
<dbReference type="EC" id="3.1.-.-" evidence="1"/>
<dbReference type="EMBL" id="AL123456">
    <property type="protein sequence ID" value="CCP45350.1"/>
    <property type="molecule type" value="Genomic_DNA"/>
</dbReference>
<dbReference type="PIR" id="F70660">
    <property type="entry name" value="F70660"/>
</dbReference>
<dbReference type="RefSeq" id="NP_217070.1">
    <property type="nucleotide sequence ID" value="NC_000962.3"/>
</dbReference>
<dbReference type="PDB" id="7ESS">
    <property type="method" value="X-ray"/>
    <property type="resolution" value="1.93 A"/>
    <property type="chains" value="A/B=1-170"/>
</dbReference>
<dbReference type="PDBsum" id="7ESS"/>
<dbReference type="SMR" id="P9WGV7"/>
<dbReference type="FunCoup" id="P9WGV7">
    <property type="interactions" value="96"/>
</dbReference>
<dbReference type="STRING" id="83332.Rv2554c"/>
<dbReference type="PaxDb" id="83332-Rv2554c"/>
<dbReference type="DNASU" id="887490"/>
<dbReference type="GeneID" id="887490"/>
<dbReference type="KEGG" id="mtu:Rv2554c"/>
<dbReference type="KEGG" id="mtv:RVBD_2554c"/>
<dbReference type="TubercuList" id="Rv2554c"/>
<dbReference type="eggNOG" id="COG0816">
    <property type="taxonomic scope" value="Bacteria"/>
</dbReference>
<dbReference type="InParanoid" id="P9WGV7"/>
<dbReference type="OrthoDB" id="9790539at2"/>
<dbReference type="PhylomeDB" id="P9WGV7"/>
<dbReference type="BRENDA" id="3.1.21.10">
    <property type="organism ID" value="3445"/>
</dbReference>
<dbReference type="Proteomes" id="UP000001584">
    <property type="component" value="Chromosome"/>
</dbReference>
<dbReference type="GO" id="GO:0005829">
    <property type="term" value="C:cytosol"/>
    <property type="evidence" value="ECO:0007005"/>
    <property type="project" value="MTBBASE"/>
</dbReference>
<dbReference type="GO" id="GO:0004518">
    <property type="term" value="F:nuclease activity"/>
    <property type="evidence" value="ECO:0007669"/>
    <property type="project" value="UniProtKB-KW"/>
</dbReference>
<dbReference type="GO" id="GO:0000967">
    <property type="term" value="P:rRNA 5'-end processing"/>
    <property type="evidence" value="ECO:0000318"/>
    <property type="project" value="GO_Central"/>
</dbReference>
<dbReference type="CDD" id="cd16964">
    <property type="entry name" value="YqgF"/>
    <property type="match status" value="1"/>
</dbReference>
<dbReference type="FunFam" id="3.30.420.140:FF:000005">
    <property type="entry name" value="Putative pre-16S rRNA nuclease"/>
    <property type="match status" value="1"/>
</dbReference>
<dbReference type="Gene3D" id="3.30.420.140">
    <property type="entry name" value="YqgF/RNase H-like domain"/>
    <property type="match status" value="1"/>
</dbReference>
<dbReference type="HAMAP" id="MF_00651">
    <property type="entry name" value="Nuclease_YqgF"/>
    <property type="match status" value="1"/>
</dbReference>
<dbReference type="InterPro" id="IPR012337">
    <property type="entry name" value="RNaseH-like_sf"/>
</dbReference>
<dbReference type="InterPro" id="IPR005227">
    <property type="entry name" value="YqgF"/>
</dbReference>
<dbReference type="InterPro" id="IPR006641">
    <property type="entry name" value="YqgF/RNaseH-like_dom"/>
</dbReference>
<dbReference type="InterPro" id="IPR037027">
    <property type="entry name" value="YqgF/RNaseH-like_dom_sf"/>
</dbReference>
<dbReference type="NCBIfam" id="TIGR00250">
    <property type="entry name" value="RNAse_H_YqgF"/>
    <property type="match status" value="1"/>
</dbReference>
<dbReference type="PANTHER" id="PTHR33317">
    <property type="entry name" value="POLYNUCLEOTIDYL TRANSFERASE, RIBONUCLEASE H-LIKE SUPERFAMILY PROTEIN"/>
    <property type="match status" value="1"/>
</dbReference>
<dbReference type="PANTHER" id="PTHR33317:SF4">
    <property type="entry name" value="POLYNUCLEOTIDYL TRANSFERASE, RIBONUCLEASE H-LIKE SUPERFAMILY PROTEIN"/>
    <property type="match status" value="1"/>
</dbReference>
<dbReference type="Pfam" id="PF03652">
    <property type="entry name" value="RuvX"/>
    <property type="match status" value="1"/>
</dbReference>
<dbReference type="SMART" id="SM00732">
    <property type="entry name" value="YqgFc"/>
    <property type="match status" value="1"/>
</dbReference>
<dbReference type="SUPFAM" id="SSF53098">
    <property type="entry name" value="Ribonuclease H-like"/>
    <property type="match status" value="1"/>
</dbReference>
<proteinExistence type="evidence at protein level"/>
<evidence type="ECO:0000255" key="1">
    <source>
        <dbReference type="HAMAP-Rule" id="MF_00651"/>
    </source>
</evidence>
<evidence type="ECO:0000256" key="2">
    <source>
        <dbReference type="SAM" id="MobiDB-lite"/>
    </source>
</evidence>
<evidence type="ECO:0007829" key="3">
    <source>
        <dbReference type="PDB" id="7ESS"/>
    </source>
</evidence>
<feature type="chain" id="PRO_0000172100" description="Putative pre-16S rRNA nuclease">
    <location>
        <begin position="1"/>
        <end position="170"/>
    </location>
</feature>
<feature type="region of interest" description="Disordered" evidence="2">
    <location>
        <begin position="1"/>
        <end position="25"/>
    </location>
</feature>
<feature type="compositionally biased region" description="Basic and acidic residues" evidence="2">
    <location>
        <begin position="7"/>
        <end position="21"/>
    </location>
</feature>
<feature type="turn" evidence="3">
    <location>
        <begin position="15"/>
        <end position="17"/>
    </location>
</feature>
<feature type="strand" evidence="3">
    <location>
        <begin position="24"/>
        <end position="29"/>
    </location>
</feature>
<feature type="strand" evidence="3">
    <location>
        <begin position="31"/>
        <end position="39"/>
    </location>
</feature>
<feature type="strand" evidence="3">
    <location>
        <begin position="46"/>
        <end position="53"/>
    </location>
</feature>
<feature type="helix" evidence="3">
    <location>
        <begin position="59"/>
        <end position="71"/>
    </location>
</feature>
<feature type="strand" evidence="3">
    <location>
        <begin position="74"/>
        <end position="80"/>
    </location>
</feature>
<feature type="helix" evidence="3">
    <location>
        <begin position="92"/>
        <end position="106"/>
    </location>
</feature>
<feature type="strand" evidence="3">
    <location>
        <begin position="111"/>
        <end position="115"/>
    </location>
</feature>
<feature type="helix" evidence="3">
    <location>
        <begin position="116"/>
        <end position="118"/>
    </location>
</feature>
<feature type="helix" evidence="3">
    <location>
        <begin position="121"/>
        <end position="131"/>
    </location>
</feature>
<feature type="helix" evidence="3">
    <location>
        <begin position="135"/>
        <end position="161"/>
    </location>
</feature>
<protein>
    <recommendedName>
        <fullName evidence="1">Putative pre-16S rRNA nuclease</fullName>
        <ecNumber evidence="1">3.1.-.-</ecNumber>
    </recommendedName>
</protein>
<organism>
    <name type="scientific">Mycobacterium tuberculosis (strain ATCC 25618 / H37Rv)</name>
    <dbReference type="NCBI Taxonomy" id="83332"/>
    <lineage>
        <taxon>Bacteria</taxon>
        <taxon>Bacillati</taxon>
        <taxon>Actinomycetota</taxon>
        <taxon>Actinomycetes</taxon>
        <taxon>Mycobacteriales</taxon>
        <taxon>Mycobacteriaceae</taxon>
        <taxon>Mycobacterium</taxon>
        <taxon>Mycobacterium tuberculosis complex</taxon>
    </lineage>
</organism>
<keyword id="KW-0002">3D-structure</keyword>
<keyword id="KW-0963">Cytoplasm</keyword>
<keyword id="KW-0378">Hydrolase</keyword>
<keyword id="KW-0540">Nuclease</keyword>
<keyword id="KW-1185">Reference proteome</keyword>
<keyword id="KW-0690">Ribosome biogenesis</keyword>